<proteinExistence type="evidence at transcript level"/>
<reference key="1">
    <citation type="journal article" date="2003" name="Science">
        <title>In-depth view of structure, activity, and evolution of rice chromosome 10.</title>
        <authorList>
            <person name="Yu Y."/>
            <person name="Rambo T."/>
            <person name="Currie J."/>
            <person name="Saski C."/>
            <person name="Kim H.-R."/>
            <person name="Collura K."/>
            <person name="Thompson S."/>
            <person name="Simmons J."/>
            <person name="Yang T.-J."/>
            <person name="Nah G."/>
            <person name="Patel A.J."/>
            <person name="Thurmond S."/>
            <person name="Henry D."/>
            <person name="Oates R."/>
            <person name="Palmer M."/>
            <person name="Pries G."/>
            <person name="Gibson J."/>
            <person name="Anderson H."/>
            <person name="Paradkar M."/>
            <person name="Crane L."/>
            <person name="Dale J."/>
            <person name="Carver M.B."/>
            <person name="Wood T."/>
            <person name="Frisch D."/>
            <person name="Engler F."/>
            <person name="Soderlund C."/>
            <person name="Palmer L.E."/>
            <person name="Teytelman L."/>
            <person name="Nascimento L."/>
            <person name="De la Bastide M."/>
            <person name="Spiegel L."/>
            <person name="Ware D."/>
            <person name="O'Shaughnessy A."/>
            <person name="Dike S."/>
            <person name="Dedhia N."/>
            <person name="Preston R."/>
            <person name="Huang E."/>
            <person name="Ferraro K."/>
            <person name="Kuit K."/>
            <person name="Miller B."/>
            <person name="Zutavern T."/>
            <person name="Katzenberger F."/>
            <person name="Muller S."/>
            <person name="Balija V."/>
            <person name="Martienssen R.A."/>
            <person name="Stein L."/>
            <person name="Minx P."/>
            <person name="Johnson D."/>
            <person name="Cordum H."/>
            <person name="Mardis E."/>
            <person name="Cheng Z."/>
            <person name="Jiang J."/>
            <person name="Wilson R."/>
            <person name="McCombie W.R."/>
            <person name="Wing R.A."/>
            <person name="Yuan Q."/>
            <person name="Ouyang S."/>
            <person name="Liu J."/>
            <person name="Jones K.M."/>
            <person name="Gansberger K."/>
            <person name="Moffat K."/>
            <person name="Hill J."/>
            <person name="Tsitrin T."/>
            <person name="Overton L."/>
            <person name="Bera J."/>
            <person name="Kim M."/>
            <person name="Jin S."/>
            <person name="Tallon L."/>
            <person name="Ciecko A."/>
            <person name="Pai G."/>
            <person name="Van Aken S."/>
            <person name="Utterback T."/>
            <person name="Reidmuller S."/>
            <person name="Bormann J."/>
            <person name="Feldblyum T."/>
            <person name="Hsiao J."/>
            <person name="Zismann V."/>
            <person name="Blunt S."/>
            <person name="de Vazeille A.R."/>
            <person name="Shaffer T."/>
            <person name="Koo H."/>
            <person name="Suh B."/>
            <person name="Yang Q."/>
            <person name="Haas B."/>
            <person name="Peterson J."/>
            <person name="Pertea M."/>
            <person name="Volfovsky N."/>
            <person name="Wortman J."/>
            <person name="White O."/>
            <person name="Salzberg S.L."/>
            <person name="Fraser C.M."/>
            <person name="Buell C.R."/>
            <person name="Messing J."/>
            <person name="Song R."/>
            <person name="Fuks G."/>
            <person name="Llaca V."/>
            <person name="Kovchak S."/>
            <person name="Young S."/>
            <person name="Bowers J.E."/>
            <person name="Paterson A.H."/>
            <person name="Johns M.A."/>
            <person name="Mao L."/>
            <person name="Pan H."/>
            <person name="Dean R.A."/>
        </authorList>
    </citation>
    <scope>NUCLEOTIDE SEQUENCE [LARGE SCALE GENOMIC DNA]</scope>
    <source>
        <strain>cv. Nipponbare</strain>
    </source>
</reference>
<reference key="2">
    <citation type="journal article" date="2005" name="Nature">
        <title>The map-based sequence of the rice genome.</title>
        <authorList>
            <consortium name="International rice genome sequencing project (IRGSP)"/>
        </authorList>
    </citation>
    <scope>NUCLEOTIDE SEQUENCE [LARGE SCALE GENOMIC DNA]</scope>
    <source>
        <strain>cv. Nipponbare</strain>
    </source>
</reference>
<reference key="3">
    <citation type="journal article" date="2013" name="Rice">
        <title>Improvement of the Oryza sativa Nipponbare reference genome using next generation sequence and optical map data.</title>
        <authorList>
            <person name="Kawahara Y."/>
            <person name="de la Bastide M."/>
            <person name="Hamilton J.P."/>
            <person name="Kanamori H."/>
            <person name="McCombie W.R."/>
            <person name="Ouyang S."/>
            <person name="Schwartz D.C."/>
            <person name="Tanaka T."/>
            <person name="Wu J."/>
            <person name="Zhou S."/>
            <person name="Childs K.L."/>
            <person name="Davidson R.M."/>
            <person name="Lin H."/>
            <person name="Quesada-Ocampo L."/>
            <person name="Vaillancourt B."/>
            <person name="Sakai H."/>
            <person name="Lee S.S."/>
            <person name="Kim J."/>
            <person name="Numa H."/>
            <person name="Itoh T."/>
            <person name="Buell C.R."/>
            <person name="Matsumoto T."/>
        </authorList>
    </citation>
    <scope>GENOME REANNOTATION</scope>
    <source>
        <strain>cv. Nipponbare</strain>
    </source>
</reference>
<reference key="4">
    <citation type="journal article" date="2005" name="PLoS Biol.">
        <title>The genomes of Oryza sativa: a history of duplications.</title>
        <authorList>
            <person name="Yu J."/>
            <person name="Wang J."/>
            <person name="Lin W."/>
            <person name="Li S."/>
            <person name="Li H."/>
            <person name="Zhou J."/>
            <person name="Ni P."/>
            <person name="Dong W."/>
            <person name="Hu S."/>
            <person name="Zeng C."/>
            <person name="Zhang J."/>
            <person name="Zhang Y."/>
            <person name="Li R."/>
            <person name="Xu Z."/>
            <person name="Li S."/>
            <person name="Li X."/>
            <person name="Zheng H."/>
            <person name="Cong L."/>
            <person name="Lin L."/>
            <person name="Yin J."/>
            <person name="Geng J."/>
            <person name="Li G."/>
            <person name="Shi J."/>
            <person name="Liu J."/>
            <person name="Lv H."/>
            <person name="Li J."/>
            <person name="Wang J."/>
            <person name="Deng Y."/>
            <person name="Ran L."/>
            <person name="Shi X."/>
            <person name="Wang X."/>
            <person name="Wu Q."/>
            <person name="Li C."/>
            <person name="Ren X."/>
            <person name="Wang J."/>
            <person name="Wang X."/>
            <person name="Li D."/>
            <person name="Liu D."/>
            <person name="Zhang X."/>
            <person name="Ji Z."/>
            <person name="Zhao W."/>
            <person name="Sun Y."/>
            <person name="Zhang Z."/>
            <person name="Bao J."/>
            <person name="Han Y."/>
            <person name="Dong L."/>
            <person name="Ji J."/>
            <person name="Chen P."/>
            <person name="Wu S."/>
            <person name="Liu J."/>
            <person name="Xiao Y."/>
            <person name="Bu D."/>
            <person name="Tan J."/>
            <person name="Yang L."/>
            <person name="Ye C."/>
            <person name="Zhang J."/>
            <person name="Xu J."/>
            <person name="Zhou Y."/>
            <person name="Yu Y."/>
            <person name="Zhang B."/>
            <person name="Zhuang S."/>
            <person name="Wei H."/>
            <person name="Liu B."/>
            <person name="Lei M."/>
            <person name="Yu H."/>
            <person name="Li Y."/>
            <person name="Xu H."/>
            <person name="Wei S."/>
            <person name="He X."/>
            <person name="Fang L."/>
            <person name="Zhang Z."/>
            <person name="Zhang Y."/>
            <person name="Huang X."/>
            <person name="Su Z."/>
            <person name="Tong W."/>
            <person name="Li J."/>
            <person name="Tong Z."/>
            <person name="Li S."/>
            <person name="Ye J."/>
            <person name="Wang L."/>
            <person name="Fang L."/>
            <person name="Lei T."/>
            <person name="Chen C.-S."/>
            <person name="Chen H.-C."/>
            <person name="Xu Z."/>
            <person name="Li H."/>
            <person name="Huang H."/>
            <person name="Zhang F."/>
            <person name="Xu H."/>
            <person name="Li N."/>
            <person name="Zhao C."/>
            <person name="Li S."/>
            <person name="Dong L."/>
            <person name="Huang Y."/>
            <person name="Li L."/>
            <person name="Xi Y."/>
            <person name="Qi Q."/>
            <person name="Li W."/>
            <person name="Zhang B."/>
            <person name="Hu W."/>
            <person name="Zhang Y."/>
            <person name="Tian X."/>
            <person name="Jiao Y."/>
            <person name="Liang X."/>
            <person name="Jin J."/>
            <person name="Gao L."/>
            <person name="Zheng W."/>
            <person name="Hao B."/>
            <person name="Liu S.-M."/>
            <person name="Wang W."/>
            <person name="Yuan L."/>
            <person name="Cao M."/>
            <person name="McDermott J."/>
            <person name="Samudrala R."/>
            <person name="Wang J."/>
            <person name="Wong G.K.-S."/>
            <person name="Yang H."/>
        </authorList>
    </citation>
    <scope>NUCLEOTIDE SEQUENCE [LARGE SCALE GENOMIC DNA]</scope>
    <source>
        <strain>cv. Nipponbare</strain>
    </source>
</reference>
<reference key="5">
    <citation type="journal article" date="2008" name="Plant Mol. Biol.">
        <title>A genome-wide survey of HD-Zip genes in rice and analysis of drought-responsive family members.</title>
        <authorList>
            <person name="Agalou A."/>
            <person name="Purwantomo S."/>
            <person name="Oevernaes E."/>
            <person name="Johannesson H."/>
            <person name="Zhu X."/>
            <person name="Estiati A."/>
            <person name="de Kam R.J."/>
            <person name="Engstroem P."/>
            <person name="Slamet-Loedin I.H."/>
            <person name="Zhu Z."/>
            <person name="Wang M."/>
            <person name="Xiong L."/>
            <person name="Meijer A.H."/>
            <person name="Ouwerkerk P.B.F."/>
        </authorList>
    </citation>
    <scope>TISSUE SPECIFICITY</scope>
    <scope>GENE FAMILY</scope>
    <scope>NOMENCLATURE</scope>
</reference>
<protein>
    <recommendedName>
        <fullName>Homeobox-leucine zipper protein HOX15</fullName>
    </recommendedName>
    <alternativeName>
        <fullName>HD-ZIP protein HOX15</fullName>
    </alternativeName>
    <alternativeName>
        <fullName>Homeodomain transcription factor HOX15</fullName>
    </alternativeName>
    <alternativeName>
        <fullName>OsHox15</fullName>
    </alternativeName>
</protein>
<evidence type="ECO:0000250" key="1"/>
<evidence type="ECO:0000255" key="2">
    <source>
        <dbReference type="PROSITE-ProRule" id="PRU00108"/>
    </source>
</evidence>
<evidence type="ECO:0000256" key="3">
    <source>
        <dbReference type="SAM" id="MobiDB-lite"/>
    </source>
</evidence>
<evidence type="ECO:0000269" key="4">
    <source>
    </source>
</evidence>
<evidence type="ECO:0000305" key="5"/>
<dbReference type="EMBL" id="AC069324">
    <property type="protein sequence ID" value="AAK00416.1"/>
    <property type="molecule type" value="Genomic_DNA"/>
</dbReference>
<dbReference type="EMBL" id="AC099400">
    <property type="protein sequence ID" value="AAL91609.1"/>
    <property type="molecule type" value="Genomic_DNA"/>
</dbReference>
<dbReference type="EMBL" id="DP000086">
    <property type="protein sequence ID" value="AAP51774.1"/>
    <property type="molecule type" value="Genomic_DNA"/>
</dbReference>
<dbReference type="EMBL" id="AP014966">
    <property type="status" value="NOT_ANNOTATED_CDS"/>
    <property type="molecule type" value="Genomic_DNA"/>
</dbReference>
<dbReference type="EMBL" id="CM000147">
    <property type="protein sequence ID" value="EAZ15048.1"/>
    <property type="molecule type" value="Genomic_DNA"/>
</dbReference>
<dbReference type="RefSeq" id="XP_015612921.1">
    <property type="nucleotide sequence ID" value="XM_015757435.1"/>
</dbReference>
<dbReference type="SMR" id="Q7G737"/>
<dbReference type="FunCoup" id="Q7G737">
    <property type="interactions" value="8"/>
</dbReference>
<dbReference type="STRING" id="39947.Q7G737"/>
<dbReference type="PaxDb" id="39947-Q7G737"/>
<dbReference type="InParanoid" id="Q7G737"/>
<dbReference type="OrthoDB" id="6159439at2759"/>
<dbReference type="Proteomes" id="UP000000763">
    <property type="component" value="Chromosome 10"/>
</dbReference>
<dbReference type="Proteomes" id="UP000007752">
    <property type="component" value="Chromosome 10"/>
</dbReference>
<dbReference type="Proteomes" id="UP000059680">
    <property type="component" value="Chromosome 10"/>
</dbReference>
<dbReference type="GO" id="GO:0005634">
    <property type="term" value="C:nucleus"/>
    <property type="evidence" value="ECO:0007669"/>
    <property type="project" value="UniProtKB-SubCell"/>
</dbReference>
<dbReference type="GO" id="GO:0000981">
    <property type="term" value="F:DNA-binding transcription factor activity, RNA polymerase II-specific"/>
    <property type="evidence" value="ECO:0007669"/>
    <property type="project" value="InterPro"/>
</dbReference>
<dbReference type="GO" id="GO:0043565">
    <property type="term" value="F:sequence-specific DNA binding"/>
    <property type="evidence" value="ECO:0007669"/>
    <property type="project" value="InterPro"/>
</dbReference>
<dbReference type="CDD" id="cd00086">
    <property type="entry name" value="homeodomain"/>
    <property type="match status" value="1"/>
</dbReference>
<dbReference type="FunFam" id="1.10.10.60:FF:000577">
    <property type="entry name" value="Homeobox-leucine zipper protein 18"/>
    <property type="match status" value="1"/>
</dbReference>
<dbReference type="Gene3D" id="1.10.10.60">
    <property type="entry name" value="Homeodomain-like"/>
    <property type="match status" value="1"/>
</dbReference>
<dbReference type="InterPro" id="IPR001356">
    <property type="entry name" value="HD"/>
</dbReference>
<dbReference type="InterPro" id="IPR050762">
    <property type="entry name" value="HD-ZIP_Homeobox_LZ_Class_II"/>
</dbReference>
<dbReference type="InterPro" id="IPR017970">
    <property type="entry name" value="Homeobox_CS"/>
</dbReference>
<dbReference type="InterPro" id="IPR009057">
    <property type="entry name" value="Homeodomain-like_sf"/>
</dbReference>
<dbReference type="InterPro" id="IPR003106">
    <property type="entry name" value="Leu_zip_homeo"/>
</dbReference>
<dbReference type="PANTHER" id="PTHR45714">
    <property type="entry name" value="HOMEOBOX-LEUCINE ZIPPER PROTEIN HAT14"/>
    <property type="match status" value="1"/>
</dbReference>
<dbReference type="PANTHER" id="PTHR45714:SF25">
    <property type="entry name" value="HOMEOBOX-LEUCINE ZIPPER PROTEIN HOX15"/>
    <property type="match status" value="1"/>
</dbReference>
<dbReference type="Pfam" id="PF02183">
    <property type="entry name" value="HALZ"/>
    <property type="match status" value="1"/>
</dbReference>
<dbReference type="Pfam" id="PF00046">
    <property type="entry name" value="Homeodomain"/>
    <property type="match status" value="1"/>
</dbReference>
<dbReference type="SMART" id="SM00340">
    <property type="entry name" value="HALZ"/>
    <property type="match status" value="1"/>
</dbReference>
<dbReference type="SMART" id="SM00389">
    <property type="entry name" value="HOX"/>
    <property type="match status" value="1"/>
</dbReference>
<dbReference type="SUPFAM" id="SSF46689">
    <property type="entry name" value="Homeodomain-like"/>
    <property type="match status" value="1"/>
</dbReference>
<dbReference type="PROSITE" id="PS00027">
    <property type="entry name" value="HOMEOBOX_1"/>
    <property type="match status" value="1"/>
</dbReference>
<dbReference type="PROSITE" id="PS50071">
    <property type="entry name" value="HOMEOBOX_2"/>
    <property type="match status" value="1"/>
</dbReference>
<name>HOX15_ORYSJ</name>
<organism>
    <name type="scientific">Oryza sativa subsp. japonica</name>
    <name type="common">Rice</name>
    <dbReference type="NCBI Taxonomy" id="39947"/>
    <lineage>
        <taxon>Eukaryota</taxon>
        <taxon>Viridiplantae</taxon>
        <taxon>Streptophyta</taxon>
        <taxon>Embryophyta</taxon>
        <taxon>Tracheophyta</taxon>
        <taxon>Spermatophyta</taxon>
        <taxon>Magnoliopsida</taxon>
        <taxon>Liliopsida</taxon>
        <taxon>Poales</taxon>
        <taxon>Poaceae</taxon>
        <taxon>BOP clade</taxon>
        <taxon>Oryzoideae</taxon>
        <taxon>Oryzeae</taxon>
        <taxon>Oryzinae</taxon>
        <taxon>Oryza</taxon>
        <taxon>Oryza sativa</taxon>
    </lineage>
</organism>
<accession>Q7G737</accession>
<accession>Q9AYJ6</accession>
<feature type="chain" id="PRO_0000331703" description="Homeobox-leucine zipper protein HOX15">
    <location>
        <begin position="1"/>
        <end position="247"/>
    </location>
</feature>
<feature type="DNA-binding region" description="Homeobox" evidence="2">
    <location>
        <begin position="91"/>
        <end position="150"/>
    </location>
</feature>
<feature type="region of interest" description="Disordered" evidence="3">
    <location>
        <begin position="1"/>
        <end position="44"/>
    </location>
</feature>
<feature type="region of interest" description="Leucine-zipper">
    <location>
        <begin position="149"/>
        <end position="193"/>
    </location>
</feature>
<feature type="region of interest" description="Disordered" evidence="3">
    <location>
        <begin position="221"/>
        <end position="247"/>
    </location>
</feature>
<feature type="compositionally biased region" description="Low complexity" evidence="3">
    <location>
        <begin position="32"/>
        <end position="44"/>
    </location>
</feature>
<sequence>MAQDDEDVGLALGLSLGSGGHRRQRESRDEAPSSAAASLLTLRLPAESGGQPQVVVKREVVRAEEEEYEYEYERALYSSSAAAADDDEGCNSRKKLRLSKEQSALLEDRFKEHSTLNPKQKVALAKQLNLRPRQVEVWFQNRRARTKLKQTEVDCELLKRCCETLTEENRRLHRELQQLRALTHSTAAGFFMATTLPVPAATLSICPSCERLATAAAAGASPTAAADRTNKPTAPHLFSPFAKSAAC</sequence>
<gene>
    <name type="primary">HOX15</name>
    <name type="ordered locus">Os10g0103700</name>
    <name type="ordered locus">LOC_Os10g01470</name>
    <name type="ORF">OsJ_029257</name>
    <name type="ORF">OSJNBa0071K19.5</name>
    <name type="ORF">OSJNBa0096E22.15</name>
</gene>
<keyword id="KW-0238">DNA-binding</keyword>
<keyword id="KW-0371">Homeobox</keyword>
<keyword id="KW-0539">Nucleus</keyword>
<keyword id="KW-1185">Reference proteome</keyword>
<keyword id="KW-0804">Transcription</keyword>
<keyword id="KW-0805">Transcription regulation</keyword>
<comment type="function">
    <text evidence="1">Probable transcription factor.</text>
</comment>
<comment type="subcellular location">
    <subcellularLocation>
        <location evidence="5">Nucleus</location>
    </subcellularLocation>
</comment>
<comment type="tissue specificity">
    <text evidence="4">Expressed in seedlings, stems, leaf blades and panicles.</text>
</comment>
<comment type="similarity">
    <text evidence="5">Belongs to the HD-ZIP homeobox family. Class II subfamily.</text>
</comment>